<dbReference type="EMBL" id="AB009048">
    <property type="protein sequence ID" value="BAB08649.1"/>
    <property type="molecule type" value="Genomic_DNA"/>
</dbReference>
<dbReference type="EMBL" id="CP002688">
    <property type="protein sequence ID" value="AED94376.1"/>
    <property type="molecule type" value="Genomic_DNA"/>
</dbReference>
<dbReference type="RefSeq" id="NP_198709.1">
    <property type="nucleotide sequence ID" value="NM_123255.2"/>
</dbReference>
<dbReference type="SMR" id="Q9FMA9"/>
<dbReference type="FunCoup" id="Q9FMA9">
    <property type="interactions" value="84"/>
</dbReference>
<dbReference type="STRING" id="3702.Q9FMA9"/>
<dbReference type="GlyGen" id="Q9FMA9">
    <property type="glycosylation" value="1 site"/>
</dbReference>
<dbReference type="PaxDb" id="3702-AT5G38930.1"/>
<dbReference type="ProteomicsDB" id="228794"/>
<dbReference type="EnsemblPlants" id="AT5G38930.1">
    <property type="protein sequence ID" value="AT5G38930.1"/>
    <property type="gene ID" value="AT5G38930"/>
</dbReference>
<dbReference type="GeneID" id="833885"/>
<dbReference type="Gramene" id="AT5G38930.1">
    <property type="protein sequence ID" value="AT5G38930.1"/>
    <property type="gene ID" value="AT5G38930"/>
</dbReference>
<dbReference type="KEGG" id="ath:AT5G38930"/>
<dbReference type="Araport" id="AT5G38930"/>
<dbReference type="TAIR" id="AT5G38930">
    <property type="gene designation" value="DEG8"/>
</dbReference>
<dbReference type="eggNOG" id="ENOG502QQ4A">
    <property type="taxonomic scope" value="Eukaryota"/>
</dbReference>
<dbReference type="HOGENOM" id="CLU_015790_0_0_1"/>
<dbReference type="InParanoid" id="Q9FMA9"/>
<dbReference type="OMA" id="NGIFGAH"/>
<dbReference type="PhylomeDB" id="Q9FMA9"/>
<dbReference type="PRO" id="PR:Q9FMA9"/>
<dbReference type="Proteomes" id="UP000006548">
    <property type="component" value="Chromosome 5"/>
</dbReference>
<dbReference type="ExpressionAtlas" id="Q9FMA9">
    <property type="expression patterns" value="baseline and differential"/>
</dbReference>
<dbReference type="GO" id="GO:0048046">
    <property type="term" value="C:apoplast"/>
    <property type="evidence" value="ECO:0007669"/>
    <property type="project" value="UniProtKB-SubCell"/>
</dbReference>
<dbReference type="GO" id="GO:0030145">
    <property type="term" value="F:manganese ion binding"/>
    <property type="evidence" value="ECO:0007669"/>
    <property type="project" value="InterPro"/>
</dbReference>
<dbReference type="CDD" id="cd02241">
    <property type="entry name" value="cupin_OxOx"/>
    <property type="match status" value="1"/>
</dbReference>
<dbReference type="FunFam" id="2.60.120.10:FF:000005">
    <property type="entry name" value="Germin-like protein subfamily 1 member 8"/>
    <property type="match status" value="1"/>
</dbReference>
<dbReference type="Gene3D" id="2.60.120.10">
    <property type="entry name" value="Jelly Rolls"/>
    <property type="match status" value="1"/>
</dbReference>
<dbReference type="InterPro" id="IPR006045">
    <property type="entry name" value="Cupin_1"/>
</dbReference>
<dbReference type="InterPro" id="IPR001929">
    <property type="entry name" value="Germin"/>
</dbReference>
<dbReference type="InterPro" id="IPR019780">
    <property type="entry name" value="Germin_Mn-BS"/>
</dbReference>
<dbReference type="InterPro" id="IPR014710">
    <property type="entry name" value="RmlC-like_jellyroll"/>
</dbReference>
<dbReference type="InterPro" id="IPR011051">
    <property type="entry name" value="RmlC_Cupin_sf"/>
</dbReference>
<dbReference type="PANTHER" id="PTHR31238">
    <property type="entry name" value="GERMIN-LIKE PROTEIN SUBFAMILY 3 MEMBER 3"/>
    <property type="match status" value="1"/>
</dbReference>
<dbReference type="Pfam" id="PF00190">
    <property type="entry name" value="Cupin_1"/>
    <property type="match status" value="1"/>
</dbReference>
<dbReference type="PRINTS" id="PR00325">
    <property type="entry name" value="GERMIN"/>
</dbReference>
<dbReference type="SMART" id="SM00835">
    <property type="entry name" value="Cupin_1"/>
    <property type="match status" value="1"/>
</dbReference>
<dbReference type="SUPFAM" id="SSF51182">
    <property type="entry name" value="RmlC-like cupins"/>
    <property type="match status" value="1"/>
</dbReference>
<dbReference type="PROSITE" id="PS00725">
    <property type="entry name" value="GERMIN"/>
    <property type="match status" value="1"/>
</dbReference>
<sequence length="223" mass="23631">MAMKSLSFLAALSLLALTLPLTIASDPSQLQDFCVSANSSANGVFVNGKFCKDPKLVTADDFFFPGLQTARPITSPVGSTVTAVNVNNLLGLNTLGISLVRIDYAVDGQNPPHTHPRATEILVVELGTLLVGFVTSNPDNRLFTKVLNEGDVFVFPEGLIHFQANIGKAPAVAFAALSSQNPGVITIAPTVFGANPAINPNILAKAFQVDPRVVMDLQTKFKK</sequence>
<name>GL110_ARATH</name>
<proteinExistence type="inferred from homology"/>
<evidence type="ECO:0000250" key="1"/>
<evidence type="ECO:0000255" key="2"/>
<evidence type="ECO:0000305" key="3"/>
<comment type="function">
    <text>May play a role in plant defense. Probably has no oxalate oxidase activity even if the active site is conserved.</text>
</comment>
<comment type="subunit">
    <text evidence="1">Oligomer (believed to be a pentamer but probably hexamer).</text>
</comment>
<comment type="subcellular location">
    <subcellularLocation>
        <location evidence="1">Secreted</location>
        <location evidence="1">Extracellular space</location>
        <location evidence="1">Apoplast</location>
    </subcellularLocation>
</comment>
<comment type="similarity">
    <text evidence="3">Belongs to the germin family.</text>
</comment>
<protein>
    <recommendedName>
        <fullName>Germin-like protein subfamily 1 member 10</fullName>
    </recommendedName>
</protein>
<gene>
    <name type="ordered locus">At5g38930</name>
    <name type="ORF">K15E6.16</name>
    <name type="ORF">K15E6_110</name>
</gene>
<keyword id="KW-0052">Apoplast</keyword>
<keyword id="KW-1015">Disulfide bond</keyword>
<keyword id="KW-0325">Glycoprotein</keyword>
<keyword id="KW-0464">Manganese</keyword>
<keyword id="KW-0479">Metal-binding</keyword>
<keyword id="KW-1185">Reference proteome</keyword>
<keyword id="KW-0964">Secreted</keyword>
<keyword id="KW-0732">Signal</keyword>
<organism>
    <name type="scientific">Arabidopsis thaliana</name>
    <name type="common">Mouse-ear cress</name>
    <dbReference type="NCBI Taxonomy" id="3702"/>
    <lineage>
        <taxon>Eukaryota</taxon>
        <taxon>Viridiplantae</taxon>
        <taxon>Streptophyta</taxon>
        <taxon>Embryophyta</taxon>
        <taxon>Tracheophyta</taxon>
        <taxon>Spermatophyta</taxon>
        <taxon>Magnoliopsida</taxon>
        <taxon>eudicotyledons</taxon>
        <taxon>Gunneridae</taxon>
        <taxon>Pentapetalae</taxon>
        <taxon>rosids</taxon>
        <taxon>malvids</taxon>
        <taxon>Brassicales</taxon>
        <taxon>Brassicaceae</taxon>
        <taxon>Camelineae</taxon>
        <taxon>Arabidopsis</taxon>
    </lineage>
</organism>
<feature type="signal peptide" evidence="2">
    <location>
        <begin position="1"/>
        <end position="24"/>
    </location>
</feature>
<feature type="chain" id="PRO_0000010810" description="Germin-like protein subfamily 1 member 10">
    <location>
        <begin position="25"/>
        <end position="223"/>
    </location>
</feature>
<feature type="domain" description="Cupin type-1" evidence="2">
    <location>
        <begin position="65"/>
        <end position="215"/>
    </location>
</feature>
<feature type="binding site" evidence="1">
    <location>
        <position position="113"/>
    </location>
    <ligand>
        <name>Mn(2+)</name>
        <dbReference type="ChEBI" id="CHEBI:29035"/>
    </ligand>
</feature>
<feature type="binding site" evidence="1">
    <location>
        <position position="115"/>
    </location>
    <ligand>
        <name>Mn(2+)</name>
        <dbReference type="ChEBI" id="CHEBI:29035"/>
    </ligand>
</feature>
<feature type="binding site" evidence="1">
    <location>
        <position position="120"/>
    </location>
    <ligand>
        <name>Mn(2+)</name>
        <dbReference type="ChEBI" id="CHEBI:29035"/>
    </ligand>
</feature>
<feature type="binding site" evidence="1">
    <location>
        <position position="161"/>
    </location>
    <ligand>
        <name>Mn(2+)</name>
        <dbReference type="ChEBI" id="CHEBI:29035"/>
    </ligand>
</feature>
<feature type="glycosylation site" description="N-linked (GlcNAc...) asparagine" evidence="2">
    <location>
        <position position="38"/>
    </location>
</feature>
<feature type="disulfide bond" evidence="1">
    <location>
        <begin position="34"/>
        <end position="51"/>
    </location>
</feature>
<reference key="1">
    <citation type="journal article" date="1998" name="DNA Res.">
        <title>Structural analysis of Arabidopsis thaliana chromosome 5. IV. Sequence features of the regions of 1,456,315 bp covered by nineteen physically assigned P1 and TAC clones.</title>
        <authorList>
            <person name="Sato S."/>
            <person name="Kaneko T."/>
            <person name="Kotani H."/>
            <person name="Nakamura Y."/>
            <person name="Asamizu E."/>
            <person name="Miyajima N."/>
            <person name="Tabata S."/>
        </authorList>
    </citation>
    <scope>NUCLEOTIDE SEQUENCE [LARGE SCALE GENOMIC DNA]</scope>
    <source>
        <strain>cv. Columbia</strain>
    </source>
</reference>
<reference key="2">
    <citation type="journal article" date="2017" name="Plant J.">
        <title>Araport11: a complete reannotation of the Arabidopsis thaliana reference genome.</title>
        <authorList>
            <person name="Cheng C.Y."/>
            <person name="Krishnakumar V."/>
            <person name="Chan A.P."/>
            <person name="Thibaud-Nissen F."/>
            <person name="Schobel S."/>
            <person name="Town C.D."/>
        </authorList>
    </citation>
    <scope>GENOME REANNOTATION</scope>
    <source>
        <strain>cv. Columbia</strain>
    </source>
</reference>
<accession>Q9FMA9</accession>